<name>Y3775_BACMK</name>
<reference key="1">
    <citation type="journal article" date="2008" name="Chem. Biol. Interact.">
        <title>Extending the Bacillus cereus group genomics to putative food-borne pathogens of different toxicity.</title>
        <authorList>
            <person name="Lapidus A."/>
            <person name="Goltsman E."/>
            <person name="Auger S."/>
            <person name="Galleron N."/>
            <person name="Segurens B."/>
            <person name="Dossat C."/>
            <person name="Land M.L."/>
            <person name="Broussolle V."/>
            <person name="Brillard J."/>
            <person name="Guinebretiere M.-H."/>
            <person name="Sanchis V."/>
            <person name="Nguen-the C."/>
            <person name="Lereclus D."/>
            <person name="Richardson P."/>
            <person name="Wincker P."/>
            <person name="Weissenbach J."/>
            <person name="Ehrlich S.D."/>
            <person name="Sorokin A."/>
        </authorList>
    </citation>
    <scope>NUCLEOTIDE SEQUENCE [LARGE SCALE GENOMIC DNA]</scope>
    <source>
        <strain>KBAB4</strain>
    </source>
</reference>
<dbReference type="EMBL" id="CP000903">
    <property type="protein sequence ID" value="ABY44944.1"/>
    <property type="molecule type" value="Genomic_DNA"/>
</dbReference>
<dbReference type="RefSeq" id="WP_002088314.1">
    <property type="nucleotide sequence ID" value="NC_010184.1"/>
</dbReference>
<dbReference type="SMR" id="A9VUB0"/>
<dbReference type="KEGG" id="bwe:BcerKBAB4_3775"/>
<dbReference type="eggNOG" id="COG4838">
    <property type="taxonomic scope" value="Bacteria"/>
</dbReference>
<dbReference type="HOGENOM" id="CLU_160493_1_0_9"/>
<dbReference type="Proteomes" id="UP000002154">
    <property type="component" value="Chromosome"/>
</dbReference>
<dbReference type="Gene3D" id="1.10.287.750">
    <property type="entry name" value="SO2669-like"/>
    <property type="match status" value="1"/>
</dbReference>
<dbReference type="HAMAP" id="MF_01560">
    <property type="entry name" value="UPF0358"/>
    <property type="match status" value="1"/>
</dbReference>
<dbReference type="InterPro" id="IPR009983">
    <property type="entry name" value="UPF0358"/>
</dbReference>
<dbReference type="InterPro" id="IPR036270">
    <property type="entry name" value="UPF0358_sf"/>
</dbReference>
<dbReference type="NCBIfam" id="NF010187">
    <property type="entry name" value="PRK13666.1"/>
    <property type="match status" value="1"/>
</dbReference>
<dbReference type="Pfam" id="PF07408">
    <property type="entry name" value="DUF1507"/>
    <property type="match status" value="1"/>
</dbReference>
<dbReference type="SUPFAM" id="SSF140404">
    <property type="entry name" value="EF2458-like"/>
    <property type="match status" value="1"/>
</dbReference>
<protein>
    <recommendedName>
        <fullName evidence="1">UPF0358 protein BcerKBAB4_3775</fullName>
    </recommendedName>
</protein>
<proteinExistence type="inferred from homology"/>
<sequence>MASETVSNHQEKALALLQADAEKILRLIKVQMDNLTMPQCPLYEEVLDTQMFGLSREVDFAVRLGLIGEEQGKAMLGELERELSALHEAFTNKQQ</sequence>
<feature type="chain" id="PRO_1000199630" description="UPF0358 protein BcerKBAB4_3775">
    <location>
        <begin position="1"/>
        <end position="95"/>
    </location>
</feature>
<accession>A9VUB0</accession>
<evidence type="ECO:0000255" key="1">
    <source>
        <dbReference type="HAMAP-Rule" id="MF_01560"/>
    </source>
</evidence>
<comment type="similarity">
    <text evidence="1">Belongs to the UPF0358 family.</text>
</comment>
<organism>
    <name type="scientific">Bacillus mycoides (strain KBAB4)</name>
    <name type="common">Bacillus weihenstephanensis</name>
    <dbReference type="NCBI Taxonomy" id="315730"/>
    <lineage>
        <taxon>Bacteria</taxon>
        <taxon>Bacillati</taxon>
        <taxon>Bacillota</taxon>
        <taxon>Bacilli</taxon>
        <taxon>Bacillales</taxon>
        <taxon>Bacillaceae</taxon>
        <taxon>Bacillus</taxon>
        <taxon>Bacillus cereus group</taxon>
    </lineage>
</organism>
<gene>
    <name type="ordered locus">BcerKBAB4_3775</name>
</gene>